<keyword id="KW-0030">Aminoacyl-tRNA synthetase</keyword>
<keyword id="KW-0067">ATP-binding</keyword>
<keyword id="KW-0963">Cytoplasm</keyword>
<keyword id="KW-0436">Ligase</keyword>
<keyword id="KW-0547">Nucleotide-binding</keyword>
<keyword id="KW-0648">Protein biosynthesis</keyword>
<keyword id="KW-1185">Reference proteome</keyword>
<protein>
    <recommendedName>
        <fullName evidence="1">Glutamate--tRNA ligase</fullName>
        <ecNumber evidence="1">6.1.1.17</ecNumber>
    </recommendedName>
    <alternativeName>
        <fullName evidence="1">Glutamyl-tRNA synthetase</fullName>
        <shortName evidence="1">GluRS</shortName>
    </alternativeName>
</protein>
<reference key="1">
    <citation type="journal article" date="2000" name="Proc. Natl. Acad. Sci. U.S.A.">
        <title>Genome sequence of Halobacterium species NRC-1.</title>
        <authorList>
            <person name="Ng W.V."/>
            <person name="Kennedy S.P."/>
            <person name="Mahairas G.G."/>
            <person name="Berquist B."/>
            <person name="Pan M."/>
            <person name="Shukla H.D."/>
            <person name="Lasky S.R."/>
            <person name="Baliga N.S."/>
            <person name="Thorsson V."/>
            <person name="Sbrogna J."/>
            <person name="Swartzell S."/>
            <person name="Weir D."/>
            <person name="Hall J."/>
            <person name="Dahl T.A."/>
            <person name="Welti R."/>
            <person name="Goo Y.A."/>
            <person name="Leithauser B."/>
            <person name="Keller K."/>
            <person name="Cruz R."/>
            <person name="Danson M.J."/>
            <person name="Hough D.W."/>
            <person name="Maddocks D.G."/>
            <person name="Jablonski P.E."/>
            <person name="Krebs M.P."/>
            <person name="Angevine C.M."/>
            <person name="Dale H."/>
            <person name="Isenbarger T.A."/>
            <person name="Peck R.F."/>
            <person name="Pohlschroder M."/>
            <person name="Spudich J.L."/>
            <person name="Jung K.-H."/>
            <person name="Alam M."/>
            <person name="Freitas T."/>
            <person name="Hou S."/>
            <person name="Daniels C.J."/>
            <person name="Dennis P.P."/>
            <person name="Omer A.D."/>
            <person name="Ebhardt H."/>
            <person name="Lowe T.M."/>
            <person name="Liang P."/>
            <person name="Riley M."/>
            <person name="Hood L."/>
            <person name="DasSarma S."/>
        </authorList>
    </citation>
    <scope>NUCLEOTIDE SEQUENCE [LARGE SCALE GENOMIC DNA]</scope>
    <source>
        <strain>ATCC 700922 / JCM 11081 / NRC-1</strain>
    </source>
</reference>
<gene>
    <name evidence="1" type="primary">gltX</name>
    <name type="ordered locus">VNG_1153G</name>
</gene>
<proteinExistence type="inferred from homology"/>
<accession>Q9HQI1</accession>
<sequence length="586" mass="65312">MDDELRERVRRAAERAALFNALKHGSDAQVGAIMGPMMGEHPDFRAHGDEIPGVIAPVIEDVNGMSDDEQRARLAELAPEDVEELDSEDEGDDHALPALPNAEAYDEVRMRCAPNPNGPWHVGHARMPSVIGTYKQRYDGSFVVRFDDTDPETKRPDLDAYDQILEDLSYLGFEADEVLTASDRVETYYEHARRLIGMGGAYTCSCPGAEFSDLKNSGEACPHRDKDPETVADEFEAMVDGEYNSGEMVLRVKTDITHKNPALRDWVAFRMVDTPHPRDAASGYRCWPMLDFQSGVDDHRTGVTHIIRGIDLQDSAKRQRFLYEYFGWEYPEVVHWGHVQLDAYDVAMSTSTIKERIAAGELEGWDDPRAPTMQSIRRRGIRGAAVVDAMVELGTSSSDVELAMSAVYANNRDLVDDTAPRQFLVRDGFEARGEGPEESHEAVEVPVDDGPDEATPQVHPEHPDRGDREIPVGERVLVEATDLPAAGDRVWLKGYGPVRYDGERFAFLDADIDIVREEGVDVVQWVPAEHNVDVRLRTMDGDVTGYAEPGFADRDADEIVQFVRVGFARVDAHRDGGASVAYFTHP</sequence>
<dbReference type="EC" id="6.1.1.17" evidence="1"/>
<dbReference type="EMBL" id="AE004437">
    <property type="protein sequence ID" value="AAG19534.1"/>
    <property type="molecule type" value="Genomic_DNA"/>
</dbReference>
<dbReference type="PIR" id="B84271">
    <property type="entry name" value="B84271"/>
</dbReference>
<dbReference type="RefSeq" id="WP_010902829.1">
    <property type="nucleotide sequence ID" value="NC_002607.1"/>
</dbReference>
<dbReference type="SMR" id="Q9HQI1"/>
<dbReference type="FunCoup" id="Q9HQI1">
    <property type="interactions" value="258"/>
</dbReference>
<dbReference type="STRING" id="64091.VNG_1153G"/>
<dbReference type="PaxDb" id="64091-VNG_1153G"/>
<dbReference type="KEGG" id="hal:VNG_1153G"/>
<dbReference type="PATRIC" id="fig|64091.14.peg.881"/>
<dbReference type="HOGENOM" id="CLU_001882_1_3_2"/>
<dbReference type="InParanoid" id="Q9HQI1"/>
<dbReference type="OrthoDB" id="10470at2157"/>
<dbReference type="PhylomeDB" id="Q9HQI1"/>
<dbReference type="Proteomes" id="UP000000554">
    <property type="component" value="Chromosome"/>
</dbReference>
<dbReference type="GO" id="GO:0005829">
    <property type="term" value="C:cytosol"/>
    <property type="evidence" value="ECO:0000318"/>
    <property type="project" value="GO_Central"/>
</dbReference>
<dbReference type="GO" id="GO:0005524">
    <property type="term" value="F:ATP binding"/>
    <property type="evidence" value="ECO:0007669"/>
    <property type="project" value="UniProtKB-UniRule"/>
</dbReference>
<dbReference type="GO" id="GO:0004818">
    <property type="term" value="F:glutamate-tRNA ligase activity"/>
    <property type="evidence" value="ECO:0007669"/>
    <property type="project" value="UniProtKB-UniRule"/>
</dbReference>
<dbReference type="GO" id="GO:0006424">
    <property type="term" value="P:glutamyl-tRNA aminoacylation"/>
    <property type="evidence" value="ECO:0007669"/>
    <property type="project" value="UniProtKB-UniRule"/>
</dbReference>
<dbReference type="CDD" id="cd09287">
    <property type="entry name" value="GluRS_non_core"/>
    <property type="match status" value="1"/>
</dbReference>
<dbReference type="FunFam" id="2.40.240.100:FF:000001">
    <property type="entry name" value="Glutamate--tRNA ligase"/>
    <property type="match status" value="1"/>
</dbReference>
<dbReference type="Gene3D" id="2.40.240.100">
    <property type="match status" value="1"/>
</dbReference>
<dbReference type="Gene3D" id="3.40.50.620">
    <property type="entry name" value="HUPs"/>
    <property type="match status" value="1"/>
</dbReference>
<dbReference type="Gene3D" id="2.40.240.10">
    <property type="entry name" value="Ribosomal Protein L25, Chain P"/>
    <property type="match status" value="1"/>
</dbReference>
<dbReference type="HAMAP" id="MF_02076">
    <property type="entry name" value="Glu_tRNA_synth_type2"/>
    <property type="match status" value="1"/>
</dbReference>
<dbReference type="InterPro" id="IPR050132">
    <property type="entry name" value="Gln/Glu-tRNA_Ligase"/>
</dbReference>
<dbReference type="InterPro" id="IPR004526">
    <property type="entry name" value="Glu-tRNA-synth_arc/euk"/>
</dbReference>
<dbReference type="InterPro" id="IPR000924">
    <property type="entry name" value="Glu/Gln-tRNA-synth"/>
</dbReference>
<dbReference type="InterPro" id="IPR020058">
    <property type="entry name" value="Glu/Gln-tRNA-synth_Ib_cat-dom"/>
</dbReference>
<dbReference type="InterPro" id="IPR020059">
    <property type="entry name" value="Glu/Gln-tRNA-synth_Ib_codon-bd"/>
</dbReference>
<dbReference type="InterPro" id="IPR020056">
    <property type="entry name" value="Rbsml_bL25/Gln-tRNA_synth_N"/>
</dbReference>
<dbReference type="InterPro" id="IPR011035">
    <property type="entry name" value="Ribosomal_bL25/Gln-tRNA_synth"/>
</dbReference>
<dbReference type="InterPro" id="IPR014729">
    <property type="entry name" value="Rossmann-like_a/b/a_fold"/>
</dbReference>
<dbReference type="InterPro" id="IPR049437">
    <property type="entry name" value="tRNA-synt_1c_C2"/>
</dbReference>
<dbReference type="NCBIfam" id="TIGR00463">
    <property type="entry name" value="gltX_arch"/>
    <property type="match status" value="1"/>
</dbReference>
<dbReference type="NCBIfam" id="NF003169">
    <property type="entry name" value="PRK04156.1"/>
    <property type="match status" value="1"/>
</dbReference>
<dbReference type="PANTHER" id="PTHR43097:SF5">
    <property type="entry name" value="GLUTAMATE--TRNA LIGASE"/>
    <property type="match status" value="1"/>
</dbReference>
<dbReference type="PANTHER" id="PTHR43097">
    <property type="entry name" value="GLUTAMINE-TRNA LIGASE"/>
    <property type="match status" value="1"/>
</dbReference>
<dbReference type="Pfam" id="PF00749">
    <property type="entry name" value="tRNA-synt_1c"/>
    <property type="match status" value="1"/>
</dbReference>
<dbReference type="Pfam" id="PF03950">
    <property type="entry name" value="tRNA-synt_1c_C"/>
    <property type="match status" value="1"/>
</dbReference>
<dbReference type="Pfam" id="PF20974">
    <property type="entry name" value="tRNA-synt_1c_C2"/>
    <property type="match status" value="1"/>
</dbReference>
<dbReference type="PRINTS" id="PR00987">
    <property type="entry name" value="TRNASYNTHGLU"/>
</dbReference>
<dbReference type="SUPFAM" id="SSF52374">
    <property type="entry name" value="Nucleotidylyl transferase"/>
    <property type="match status" value="1"/>
</dbReference>
<dbReference type="SUPFAM" id="SSF50715">
    <property type="entry name" value="Ribosomal protein L25-like"/>
    <property type="match status" value="1"/>
</dbReference>
<organism>
    <name type="scientific">Halobacterium salinarum (strain ATCC 700922 / JCM 11081 / NRC-1)</name>
    <name type="common">Halobacterium halobium</name>
    <dbReference type="NCBI Taxonomy" id="64091"/>
    <lineage>
        <taxon>Archaea</taxon>
        <taxon>Methanobacteriati</taxon>
        <taxon>Methanobacteriota</taxon>
        <taxon>Stenosarchaea group</taxon>
        <taxon>Halobacteria</taxon>
        <taxon>Halobacteriales</taxon>
        <taxon>Halobacteriaceae</taxon>
        <taxon>Halobacterium</taxon>
        <taxon>Halobacterium salinarum NRC-34001</taxon>
    </lineage>
</organism>
<comment type="function">
    <text evidence="1">Catalyzes the attachment of glutamate to tRNA(Glu) in a two-step reaction: glutamate is first activated by ATP to form Glu-AMP and then transferred to the acceptor end of tRNA(Glu).</text>
</comment>
<comment type="catalytic activity">
    <reaction evidence="1">
        <text>tRNA(Glu) + L-glutamate + ATP = L-glutamyl-tRNA(Glu) + AMP + diphosphate</text>
        <dbReference type="Rhea" id="RHEA:23540"/>
        <dbReference type="Rhea" id="RHEA-COMP:9663"/>
        <dbReference type="Rhea" id="RHEA-COMP:9680"/>
        <dbReference type="ChEBI" id="CHEBI:29985"/>
        <dbReference type="ChEBI" id="CHEBI:30616"/>
        <dbReference type="ChEBI" id="CHEBI:33019"/>
        <dbReference type="ChEBI" id="CHEBI:78442"/>
        <dbReference type="ChEBI" id="CHEBI:78520"/>
        <dbReference type="ChEBI" id="CHEBI:456215"/>
        <dbReference type="EC" id="6.1.1.17"/>
    </reaction>
</comment>
<comment type="subcellular location">
    <subcellularLocation>
        <location evidence="1">Cytoplasm</location>
    </subcellularLocation>
</comment>
<comment type="similarity">
    <text evidence="1">Belongs to the class-I aminoacyl-tRNA synthetase family. Glutamate--tRNA ligase type 2 subfamily.</text>
</comment>
<feature type="chain" id="PRO_0000119715" description="Glutamate--tRNA ligase">
    <location>
        <begin position="1"/>
        <end position="586"/>
    </location>
</feature>
<feature type="region of interest" description="Disordered" evidence="2">
    <location>
        <begin position="431"/>
        <end position="468"/>
    </location>
</feature>
<feature type="short sequence motif" description="'HIGH' region" evidence="1">
    <location>
        <begin position="114"/>
        <end position="124"/>
    </location>
</feature>
<feature type="compositionally biased region" description="Basic and acidic residues" evidence="2">
    <location>
        <begin position="431"/>
        <end position="443"/>
    </location>
</feature>
<feature type="compositionally biased region" description="Basic and acidic residues" evidence="2">
    <location>
        <begin position="459"/>
        <end position="468"/>
    </location>
</feature>
<name>SYE_HALSA</name>
<evidence type="ECO:0000255" key="1">
    <source>
        <dbReference type="HAMAP-Rule" id="MF_02076"/>
    </source>
</evidence>
<evidence type="ECO:0000256" key="2">
    <source>
        <dbReference type="SAM" id="MobiDB-lite"/>
    </source>
</evidence>